<evidence type="ECO:0000255" key="1"/>
<protein>
    <recommendedName>
        <fullName>Uncharacterized protein aq_1259</fullName>
    </recommendedName>
</protein>
<feature type="signal peptide" evidence="1">
    <location>
        <begin position="1"/>
        <end position="18"/>
    </location>
</feature>
<feature type="chain" id="PRO_0000013620" description="Uncharacterized protein aq_1259">
    <location>
        <begin position="19"/>
        <end position="436"/>
    </location>
</feature>
<sequence length="436" mass="49421">MMKRFVALSMAIFSLSFAQDVDEKIKALEEQIESLQKELQELKKAKEETEVLKEEFRKLRLEIVMPEAYKPYAGLGPAASKVYQVKKGVSIGGYGELHYINNPDNDPSSIIDLKRLILYFGYSFTENLKFNSEIEIEHAFVEGGEESGELAVEFAYLDYNFSPKFGLRGGMLLIPVGIVNELHEPPTFPTVDRPYLERNIIPTTWSENGIGIYGDTDLISYRAYIVNGMKAEEGEFKASAPLKKLRQNGGEAVSDSLAFTGRIDFKLPNNLTVGASTFISGVQNEDGKNLGNIYLFSPHLWWQYAGWDVRFVGAYATVSDAEKITLELSSATCDKSTCNVFPKRMQGFYLQVAYNILRHFDTEQELYVFGVYENYDTHASVPSGYEKPKGSEVQIFNFGISYKPHPLVALKADYVREDYKDKKDNDIYRAAITWMF</sequence>
<organism>
    <name type="scientific">Aquifex aeolicus (strain VF5)</name>
    <dbReference type="NCBI Taxonomy" id="224324"/>
    <lineage>
        <taxon>Bacteria</taxon>
        <taxon>Pseudomonadati</taxon>
        <taxon>Aquificota</taxon>
        <taxon>Aquificia</taxon>
        <taxon>Aquificales</taxon>
        <taxon>Aquificaceae</taxon>
        <taxon>Aquifex</taxon>
    </lineage>
</organism>
<reference key="1">
    <citation type="journal article" date="1998" name="Nature">
        <title>The complete genome of the hyperthermophilic bacterium Aquifex aeolicus.</title>
        <authorList>
            <person name="Deckert G."/>
            <person name="Warren P.V."/>
            <person name="Gaasterland T."/>
            <person name="Young W.G."/>
            <person name="Lenox A.L."/>
            <person name="Graham D.E."/>
            <person name="Overbeek R."/>
            <person name="Snead M.A."/>
            <person name="Keller M."/>
            <person name="Aujay M."/>
            <person name="Huber R."/>
            <person name="Feldman R.A."/>
            <person name="Short J.M."/>
            <person name="Olsen G.J."/>
            <person name="Swanson R.V."/>
        </authorList>
    </citation>
    <scope>NUCLEOTIDE SEQUENCE [LARGE SCALE GENOMIC DNA]</scope>
    <source>
        <strain>VF5</strain>
    </source>
</reference>
<name>Y1259_AQUAE</name>
<dbReference type="EMBL" id="AE000657">
    <property type="protein sequence ID" value="AAC07262.1"/>
    <property type="molecule type" value="Genomic_DNA"/>
</dbReference>
<dbReference type="PIR" id="A70409">
    <property type="entry name" value="A70409"/>
</dbReference>
<dbReference type="RefSeq" id="NP_213864.1">
    <property type="nucleotide sequence ID" value="NC_000918.1"/>
</dbReference>
<dbReference type="SMR" id="O67300"/>
<dbReference type="STRING" id="224324.aq_1259"/>
<dbReference type="TCDB" id="1.B.3.1.7">
    <property type="family name" value="the sugar porin (sp) family"/>
</dbReference>
<dbReference type="EnsemblBacteria" id="AAC07262">
    <property type="protein sequence ID" value="AAC07262"/>
    <property type="gene ID" value="aq_1259"/>
</dbReference>
<dbReference type="KEGG" id="aae:aq_1259"/>
<dbReference type="PATRIC" id="fig|224324.8.peg.982"/>
<dbReference type="eggNOG" id="COG1730">
    <property type="taxonomic scope" value="Bacteria"/>
</dbReference>
<dbReference type="HOGENOM" id="CLU_041653_0_0_0"/>
<dbReference type="InParanoid" id="O67300"/>
<dbReference type="OrthoDB" id="9768080at2"/>
<dbReference type="Proteomes" id="UP000000798">
    <property type="component" value="Chromosome"/>
</dbReference>
<dbReference type="Gene3D" id="2.40.160.10">
    <property type="entry name" value="Porin"/>
    <property type="match status" value="1"/>
</dbReference>
<dbReference type="InterPro" id="IPR023614">
    <property type="entry name" value="Porin_dom_sf"/>
</dbReference>
<dbReference type="SUPFAM" id="SSF56935">
    <property type="entry name" value="Porins"/>
    <property type="match status" value="1"/>
</dbReference>
<gene>
    <name type="ordered locus">aq_1259</name>
</gene>
<proteinExistence type="inferred from homology"/>
<keyword id="KW-1185">Reference proteome</keyword>
<keyword id="KW-0732">Signal</keyword>
<accession>O67300</accession>